<dbReference type="EMBL" id="AAFI02000024">
    <property type="protein sequence ID" value="EAL68062.1"/>
    <property type="molecule type" value="Genomic_DNA"/>
</dbReference>
<dbReference type="RefSeq" id="XP_647824.1">
    <property type="nucleotide sequence ID" value="XM_642732.1"/>
</dbReference>
<dbReference type="SMR" id="Q54XH9"/>
<dbReference type="PaxDb" id="44689-DDB0231335"/>
<dbReference type="EnsemblProtists" id="EAL68062">
    <property type="protein sequence ID" value="EAL68062"/>
    <property type="gene ID" value="DDB_G0278921"/>
</dbReference>
<dbReference type="GeneID" id="8621784"/>
<dbReference type="KEGG" id="ddi:DDB_G0278921"/>
<dbReference type="dictyBase" id="DDB_G0278921"/>
<dbReference type="VEuPathDB" id="AmoebaDB:DDB_G0278921"/>
<dbReference type="HOGENOM" id="CLU_316742_0_0_1"/>
<dbReference type="InParanoid" id="Q54XH9"/>
<dbReference type="PRO" id="PR:Q54XH9"/>
<dbReference type="Proteomes" id="UP000002195">
    <property type="component" value="Chromosome 3"/>
</dbReference>
<dbReference type="Gene3D" id="1.25.40.10">
    <property type="entry name" value="Tetratricopeptide repeat domain"/>
    <property type="match status" value="1"/>
</dbReference>
<dbReference type="Gene3D" id="1.10.510.10">
    <property type="entry name" value="Transferase(Phosphotransferase) domain 1"/>
    <property type="match status" value="1"/>
</dbReference>
<dbReference type="InterPro" id="IPR004147">
    <property type="entry name" value="ABC1_dom"/>
</dbReference>
<dbReference type="InterPro" id="IPR011009">
    <property type="entry name" value="Kinase-like_dom_sf"/>
</dbReference>
<dbReference type="InterPro" id="IPR051590">
    <property type="entry name" value="Replication_Regulatory_Kinase"/>
</dbReference>
<dbReference type="InterPro" id="IPR011990">
    <property type="entry name" value="TPR-like_helical_dom_sf"/>
</dbReference>
<dbReference type="PANTHER" id="PTHR15375">
    <property type="entry name" value="ACTIVATOR OF S-PHASE KINASE-RELATED"/>
    <property type="match status" value="1"/>
</dbReference>
<dbReference type="PANTHER" id="PTHR15375:SF27">
    <property type="entry name" value="DBF4-TYPE DOMAIN-CONTAINING PROTEIN"/>
    <property type="match status" value="1"/>
</dbReference>
<dbReference type="Pfam" id="PF03109">
    <property type="entry name" value="ABC1"/>
    <property type="match status" value="1"/>
</dbReference>
<dbReference type="SUPFAM" id="SSF56112">
    <property type="entry name" value="Protein kinase-like (PK-like)"/>
    <property type="match status" value="1"/>
</dbReference>
<dbReference type="SUPFAM" id="SSF48452">
    <property type="entry name" value="TPR-like"/>
    <property type="match status" value="1"/>
</dbReference>
<comment type="domain">
    <text>The kinase-like region is slightly similar to the kinase domain but does not correspond to a canonical kinase domain and is predicted to be catalytically inactive.</text>
</comment>
<feature type="chain" id="PRO_0000362001" description="Putative uncharacterized protein DDB_G0278921">
    <location>
        <begin position="1"/>
        <end position="921"/>
    </location>
</feature>
<feature type="region of interest" description="Kinase-like">
    <location>
        <begin position="334"/>
        <end position="628"/>
    </location>
</feature>
<feature type="region of interest" description="Disordered" evidence="1">
    <location>
        <begin position="401"/>
        <end position="499"/>
    </location>
</feature>
<feature type="region of interest" description="Disordered" evidence="1">
    <location>
        <begin position="664"/>
        <end position="711"/>
    </location>
</feature>
<feature type="compositionally biased region" description="Low complexity" evidence="1">
    <location>
        <begin position="401"/>
        <end position="494"/>
    </location>
</feature>
<evidence type="ECO:0000256" key="1">
    <source>
        <dbReference type="SAM" id="MobiDB-lite"/>
    </source>
</evidence>
<sequence>MVNDNKTYFQRSLRIERIPIDFKYKIWNLLLIAKAKLNTTHDGELNTTNFDELNQMIDSRINNPSYSEEIKESLNFIKDIKNQCNLLPSVNFLTPNKNYDDLIEKFKVILLNLRFKEDDIKNFNYNGQHYLNDQHIKLNRKGIEYYKNKDYGNALKCYNQIEKSPFKSLSFHLISKNSLNLAILYSKLNNGPKAIESSLKSCIYNPLNNRAYFYYGRYILESNKQKALDHLYTAFIMESKTKEKQYYEHEYFSLKDTTISGFKKVEESLKMETRQNLLNMYHFIGPSNNQISQTVEQYMDQVANQTQTEKAHNYNDWVTKINDKIKLTKQTIKMTKRKFLSIDELISNPFDINEIQFDALQSNGMNGIVKSGTIGSMKVVVKFPNSYFNGIISTATINSTGSSEWSFGSSDNGGNNSNSNGNSDSNSNNDSNNNNNNNNNNNNNNNNNNNNNNNNNNNNNNNNNNNNNNNNNNNNNNNNNNNSNNNNNSDGSSGDDNRNSDNLIKSDLIDECFLNETVSHLLINEFQINNTPSIVGIGINMIVMEKVDGTELEKYDKTKLTKKIFMDLVIYLMEMNIFEIQHRDLHAANILIKEDGSLSIIDYGYSNIGDDRKGYDISNLKSIYYDFFNNYDTINHDKKEKIKNVFNYLNLNLNSNSNLNLNLNLYSNSNPNSNPNSNPNPKSNLNLNSNSNSNPNPNLNSYSNSHSNSNSNLNSNQKILIDLLNILIEDEEILIPIHSKSYNDERQIEYIFAKRDNDKFLLNDKTFPKIPHCLEMDNKIDLSETPMLKTNIIKKSLKTILPPFIKVCDLEIKGKKELVFWVQDRGNIIIYVPISIESQKFNGCVCPYGQYFHSKLCIFTDKEEYDIPLSFRTKGNIHLDDKPIARFRPLTHVRYICFALKLCDGLKNEYIIEPFEEQFEK</sequence>
<protein>
    <recommendedName>
        <fullName>Putative uncharacterized protein DDB_G0278921</fullName>
    </recommendedName>
</protein>
<organism>
    <name type="scientific">Dictyostelium discoideum</name>
    <name type="common">Social amoeba</name>
    <dbReference type="NCBI Taxonomy" id="44689"/>
    <lineage>
        <taxon>Eukaryota</taxon>
        <taxon>Amoebozoa</taxon>
        <taxon>Evosea</taxon>
        <taxon>Eumycetozoa</taxon>
        <taxon>Dictyostelia</taxon>
        <taxon>Dictyosteliales</taxon>
        <taxon>Dictyosteliaceae</taxon>
        <taxon>Dictyostelium</taxon>
    </lineage>
</organism>
<reference key="1">
    <citation type="journal article" date="2005" name="Nature">
        <title>The genome of the social amoeba Dictyostelium discoideum.</title>
        <authorList>
            <person name="Eichinger L."/>
            <person name="Pachebat J.A."/>
            <person name="Gloeckner G."/>
            <person name="Rajandream M.A."/>
            <person name="Sucgang R."/>
            <person name="Berriman M."/>
            <person name="Song J."/>
            <person name="Olsen R."/>
            <person name="Szafranski K."/>
            <person name="Xu Q."/>
            <person name="Tunggal B."/>
            <person name="Kummerfeld S."/>
            <person name="Madera M."/>
            <person name="Konfortov B.A."/>
            <person name="Rivero F."/>
            <person name="Bankier A.T."/>
            <person name="Lehmann R."/>
            <person name="Hamlin N."/>
            <person name="Davies R."/>
            <person name="Gaudet P."/>
            <person name="Fey P."/>
            <person name="Pilcher K."/>
            <person name="Chen G."/>
            <person name="Saunders D."/>
            <person name="Sodergren E.J."/>
            <person name="Davis P."/>
            <person name="Kerhornou A."/>
            <person name="Nie X."/>
            <person name="Hall N."/>
            <person name="Anjard C."/>
            <person name="Hemphill L."/>
            <person name="Bason N."/>
            <person name="Farbrother P."/>
            <person name="Desany B."/>
            <person name="Just E."/>
            <person name="Morio T."/>
            <person name="Rost R."/>
            <person name="Churcher C.M."/>
            <person name="Cooper J."/>
            <person name="Haydock S."/>
            <person name="van Driessche N."/>
            <person name="Cronin A."/>
            <person name="Goodhead I."/>
            <person name="Muzny D.M."/>
            <person name="Mourier T."/>
            <person name="Pain A."/>
            <person name="Lu M."/>
            <person name="Harper D."/>
            <person name="Lindsay R."/>
            <person name="Hauser H."/>
            <person name="James K.D."/>
            <person name="Quiles M."/>
            <person name="Madan Babu M."/>
            <person name="Saito T."/>
            <person name="Buchrieser C."/>
            <person name="Wardroper A."/>
            <person name="Felder M."/>
            <person name="Thangavelu M."/>
            <person name="Johnson D."/>
            <person name="Knights A."/>
            <person name="Loulseged H."/>
            <person name="Mungall K.L."/>
            <person name="Oliver K."/>
            <person name="Price C."/>
            <person name="Quail M.A."/>
            <person name="Urushihara H."/>
            <person name="Hernandez J."/>
            <person name="Rabbinowitsch E."/>
            <person name="Steffen D."/>
            <person name="Sanders M."/>
            <person name="Ma J."/>
            <person name="Kohara Y."/>
            <person name="Sharp S."/>
            <person name="Simmonds M.N."/>
            <person name="Spiegler S."/>
            <person name="Tivey A."/>
            <person name="Sugano S."/>
            <person name="White B."/>
            <person name="Walker D."/>
            <person name="Woodward J.R."/>
            <person name="Winckler T."/>
            <person name="Tanaka Y."/>
            <person name="Shaulsky G."/>
            <person name="Schleicher M."/>
            <person name="Weinstock G.M."/>
            <person name="Rosenthal A."/>
            <person name="Cox E.C."/>
            <person name="Chisholm R.L."/>
            <person name="Gibbs R.A."/>
            <person name="Loomis W.F."/>
            <person name="Platzer M."/>
            <person name="Kay R.R."/>
            <person name="Williams J.G."/>
            <person name="Dear P.H."/>
            <person name="Noegel A.A."/>
            <person name="Barrell B.G."/>
            <person name="Kuspa A."/>
        </authorList>
    </citation>
    <scope>NUCLEOTIDE SEQUENCE [LARGE SCALE GENOMIC DNA]</scope>
    <source>
        <strain>AX4</strain>
    </source>
</reference>
<accession>Q54XH9</accession>
<gene>
    <name type="ORF">DDB_G0278921</name>
</gene>
<name>Y8921_DICDI</name>
<keyword id="KW-1185">Reference proteome</keyword>
<proteinExistence type="predicted"/>